<gene>
    <name evidence="1" type="primary">atpA</name>
    <name type="ordered locus">HD_0008</name>
</gene>
<protein>
    <recommendedName>
        <fullName evidence="1">ATP synthase subunit alpha</fullName>
        <ecNumber evidence="1">7.1.2.2</ecNumber>
    </recommendedName>
    <alternativeName>
        <fullName evidence="1">ATP synthase F1 sector subunit alpha</fullName>
    </alternativeName>
    <alternativeName>
        <fullName evidence="1">F-ATPase subunit alpha</fullName>
    </alternativeName>
</protein>
<comment type="function">
    <text evidence="1">Produces ATP from ADP in the presence of a proton gradient across the membrane. The alpha chain is a regulatory subunit.</text>
</comment>
<comment type="catalytic activity">
    <reaction evidence="1">
        <text>ATP + H2O + 4 H(+)(in) = ADP + phosphate + 5 H(+)(out)</text>
        <dbReference type="Rhea" id="RHEA:57720"/>
        <dbReference type="ChEBI" id="CHEBI:15377"/>
        <dbReference type="ChEBI" id="CHEBI:15378"/>
        <dbReference type="ChEBI" id="CHEBI:30616"/>
        <dbReference type="ChEBI" id="CHEBI:43474"/>
        <dbReference type="ChEBI" id="CHEBI:456216"/>
        <dbReference type="EC" id="7.1.2.2"/>
    </reaction>
</comment>
<comment type="subunit">
    <text evidence="1">F-type ATPases have 2 components, CF(1) - the catalytic core - and CF(0) - the membrane proton channel. CF(1) has five subunits: alpha(3), beta(3), gamma(1), delta(1), epsilon(1). CF(0) has three main subunits: a(1), b(2) and c(9-12). The alpha and beta chains form an alternating ring which encloses part of the gamma chain. CF(1) is attached to CF(0) by a central stalk formed by the gamma and epsilon chains, while a peripheral stalk is formed by the delta and b chains.</text>
</comment>
<comment type="subcellular location">
    <subcellularLocation>
        <location evidence="1">Cell inner membrane</location>
        <topology evidence="1">Peripheral membrane protein</topology>
    </subcellularLocation>
</comment>
<comment type="similarity">
    <text evidence="1">Belongs to the ATPase alpha/beta chains family.</text>
</comment>
<sequence length="513" mass="55257">MQLNSTEISELIKKRIAQFNVVSEAQSTGTIVSVSDGIIRIHGLADVMQGEMIELPGNRYAIALNLERDSVGAVVMGPYADLAEGMTVKCTGRILEVPVGKGLLGRVVNTLGQPIDGKGEIDNDGFSPVEVIAPGVIDRQSVDQPVQTGYKAVDSMVPIGRGQRELIIGDRQTGKTSLVIDAIIAQRDSGIKCIYVAIGQKASTIANVVRKLEEHGALANTIVVVASASESAALQYLAPYSGCAMGEYFRDRGEDALIVYDDLSKQAVAYRQISLLLRRPPGREAFPGDVFYLHSRLLERAARVNAEYVERFTNGAVTGRTGSLTALPIIETQAGDVSAFVPTNVISITDGQIFLESSLFNSGIRPAVNPGISVSRVGSAAQTKVIKKLSGGIRTALAQYRELAAFAQFASDLDDATRKQLSHGQKVTELLKQKQFAPMPVSEQALVLFAAEFGYLDGVELERISSFESALLAYANSNHADFMKDLAKSGNFNDSIQQELKTIVENFKKNGAW</sequence>
<reference key="1">
    <citation type="submission" date="2003-06" db="EMBL/GenBank/DDBJ databases">
        <title>The complete genome sequence of Haemophilus ducreyi.</title>
        <authorList>
            <person name="Munson R.S. Jr."/>
            <person name="Ray W.C."/>
            <person name="Mahairas G."/>
            <person name="Sabo P."/>
            <person name="Mungur R."/>
            <person name="Johnson L."/>
            <person name="Nguyen D."/>
            <person name="Wang J."/>
            <person name="Forst C."/>
            <person name="Hood L."/>
        </authorList>
    </citation>
    <scope>NUCLEOTIDE SEQUENCE [LARGE SCALE GENOMIC DNA]</scope>
    <source>
        <strain>35000HP / ATCC 700724</strain>
    </source>
</reference>
<evidence type="ECO:0000255" key="1">
    <source>
        <dbReference type="HAMAP-Rule" id="MF_01346"/>
    </source>
</evidence>
<accession>Q7VPP2</accession>
<keyword id="KW-0066">ATP synthesis</keyword>
<keyword id="KW-0067">ATP-binding</keyword>
<keyword id="KW-0997">Cell inner membrane</keyword>
<keyword id="KW-1003">Cell membrane</keyword>
<keyword id="KW-0139">CF(1)</keyword>
<keyword id="KW-0375">Hydrogen ion transport</keyword>
<keyword id="KW-0406">Ion transport</keyword>
<keyword id="KW-0472">Membrane</keyword>
<keyword id="KW-0547">Nucleotide-binding</keyword>
<keyword id="KW-1185">Reference proteome</keyword>
<keyword id="KW-1278">Translocase</keyword>
<keyword id="KW-0813">Transport</keyword>
<feature type="chain" id="PRO_0000238259" description="ATP synthase subunit alpha">
    <location>
        <begin position="1"/>
        <end position="513"/>
    </location>
</feature>
<feature type="binding site" evidence="1">
    <location>
        <begin position="169"/>
        <end position="176"/>
    </location>
    <ligand>
        <name>ATP</name>
        <dbReference type="ChEBI" id="CHEBI:30616"/>
    </ligand>
</feature>
<feature type="site" description="Required for activity" evidence="1">
    <location>
        <position position="373"/>
    </location>
</feature>
<proteinExistence type="inferred from homology"/>
<organism>
    <name type="scientific">Haemophilus ducreyi (strain 35000HP / ATCC 700724)</name>
    <dbReference type="NCBI Taxonomy" id="233412"/>
    <lineage>
        <taxon>Bacteria</taxon>
        <taxon>Pseudomonadati</taxon>
        <taxon>Pseudomonadota</taxon>
        <taxon>Gammaproteobacteria</taxon>
        <taxon>Pasteurellales</taxon>
        <taxon>Pasteurellaceae</taxon>
        <taxon>Haemophilus</taxon>
    </lineage>
</organism>
<dbReference type="EC" id="7.1.2.2" evidence="1"/>
<dbReference type="EMBL" id="AE017143">
    <property type="protein sequence ID" value="AAP95032.1"/>
    <property type="molecule type" value="Genomic_DNA"/>
</dbReference>
<dbReference type="RefSeq" id="WP_010944086.1">
    <property type="nucleotide sequence ID" value="NC_002940.2"/>
</dbReference>
<dbReference type="SMR" id="Q7VPP2"/>
<dbReference type="STRING" id="233412.HD_0008"/>
<dbReference type="KEGG" id="hdu:HD_0008"/>
<dbReference type="eggNOG" id="COG0056">
    <property type="taxonomic scope" value="Bacteria"/>
</dbReference>
<dbReference type="HOGENOM" id="CLU_010091_2_1_6"/>
<dbReference type="OrthoDB" id="9803053at2"/>
<dbReference type="Proteomes" id="UP000001022">
    <property type="component" value="Chromosome"/>
</dbReference>
<dbReference type="GO" id="GO:0005886">
    <property type="term" value="C:plasma membrane"/>
    <property type="evidence" value="ECO:0007669"/>
    <property type="project" value="UniProtKB-SubCell"/>
</dbReference>
<dbReference type="GO" id="GO:0045259">
    <property type="term" value="C:proton-transporting ATP synthase complex"/>
    <property type="evidence" value="ECO:0007669"/>
    <property type="project" value="UniProtKB-KW"/>
</dbReference>
<dbReference type="GO" id="GO:0043531">
    <property type="term" value="F:ADP binding"/>
    <property type="evidence" value="ECO:0007669"/>
    <property type="project" value="TreeGrafter"/>
</dbReference>
<dbReference type="GO" id="GO:0005524">
    <property type="term" value="F:ATP binding"/>
    <property type="evidence" value="ECO:0007669"/>
    <property type="project" value="UniProtKB-UniRule"/>
</dbReference>
<dbReference type="GO" id="GO:0046933">
    <property type="term" value="F:proton-transporting ATP synthase activity, rotational mechanism"/>
    <property type="evidence" value="ECO:0007669"/>
    <property type="project" value="UniProtKB-UniRule"/>
</dbReference>
<dbReference type="CDD" id="cd18113">
    <property type="entry name" value="ATP-synt_F1_alpha_C"/>
    <property type="match status" value="1"/>
</dbReference>
<dbReference type="CDD" id="cd18116">
    <property type="entry name" value="ATP-synt_F1_alpha_N"/>
    <property type="match status" value="1"/>
</dbReference>
<dbReference type="CDD" id="cd01132">
    <property type="entry name" value="F1-ATPase_alpha_CD"/>
    <property type="match status" value="1"/>
</dbReference>
<dbReference type="FunFam" id="1.20.150.20:FF:000001">
    <property type="entry name" value="ATP synthase subunit alpha"/>
    <property type="match status" value="1"/>
</dbReference>
<dbReference type="FunFam" id="2.40.30.20:FF:000001">
    <property type="entry name" value="ATP synthase subunit alpha"/>
    <property type="match status" value="1"/>
</dbReference>
<dbReference type="FunFam" id="3.40.50.300:FF:000002">
    <property type="entry name" value="ATP synthase subunit alpha"/>
    <property type="match status" value="1"/>
</dbReference>
<dbReference type="Gene3D" id="2.40.30.20">
    <property type="match status" value="1"/>
</dbReference>
<dbReference type="Gene3D" id="1.20.150.20">
    <property type="entry name" value="ATP synthase alpha/beta chain, C-terminal domain"/>
    <property type="match status" value="1"/>
</dbReference>
<dbReference type="Gene3D" id="3.40.50.300">
    <property type="entry name" value="P-loop containing nucleotide triphosphate hydrolases"/>
    <property type="match status" value="1"/>
</dbReference>
<dbReference type="HAMAP" id="MF_01346">
    <property type="entry name" value="ATP_synth_alpha_bact"/>
    <property type="match status" value="1"/>
</dbReference>
<dbReference type="InterPro" id="IPR023366">
    <property type="entry name" value="ATP_synth_asu-like_sf"/>
</dbReference>
<dbReference type="InterPro" id="IPR000793">
    <property type="entry name" value="ATP_synth_asu_C"/>
</dbReference>
<dbReference type="InterPro" id="IPR038376">
    <property type="entry name" value="ATP_synth_asu_C_sf"/>
</dbReference>
<dbReference type="InterPro" id="IPR033732">
    <property type="entry name" value="ATP_synth_F1_a_nt-bd_dom"/>
</dbReference>
<dbReference type="InterPro" id="IPR005294">
    <property type="entry name" value="ATP_synth_F1_asu"/>
</dbReference>
<dbReference type="InterPro" id="IPR020003">
    <property type="entry name" value="ATPase_a/bsu_AS"/>
</dbReference>
<dbReference type="InterPro" id="IPR004100">
    <property type="entry name" value="ATPase_F1/V1/A1_a/bsu_N"/>
</dbReference>
<dbReference type="InterPro" id="IPR036121">
    <property type="entry name" value="ATPase_F1/V1/A1_a/bsu_N_sf"/>
</dbReference>
<dbReference type="InterPro" id="IPR000194">
    <property type="entry name" value="ATPase_F1/V1/A1_a/bsu_nucl-bd"/>
</dbReference>
<dbReference type="InterPro" id="IPR027417">
    <property type="entry name" value="P-loop_NTPase"/>
</dbReference>
<dbReference type="NCBIfam" id="TIGR00962">
    <property type="entry name" value="atpA"/>
    <property type="match status" value="1"/>
</dbReference>
<dbReference type="NCBIfam" id="NF009884">
    <property type="entry name" value="PRK13343.1"/>
    <property type="match status" value="1"/>
</dbReference>
<dbReference type="PANTHER" id="PTHR48082">
    <property type="entry name" value="ATP SYNTHASE SUBUNIT ALPHA, MITOCHONDRIAL"/>
    <property type="match status" value="1"/>
</dbReference>
<dbReference type="PANTHER" id="PTHR48082:SF2">
    <property type="entry name" value="ATP SYNTHASE SUBUNIT ALPHA, MITOCHONDRIAL"/>
    <property type="match status" value="1"/>
</dbReference>
<dbReference type="Pfam" id="PF00006">
    <property type="entry name" value="ATP-synt_ab"/>
    <property type="match status" value="1"/>
</dbReference>
<dbReference type="Pfam" id="PF00306">
    <property type="entry name" value="ATP-synt_ab_C"/>
    <property type="match status" value="1"/>
</dbReference>
<dbReference type="Pfam" id="PF02874">
    <property type="entry name" value="ATP-synt_ab_N"/>
    <property type="match status" value="1"/>
</dbReference>
<dbReference type="SUPFAM" id="SSF47917">
    <property type="entry name" value="C-terminal domain of alpha and beta subunits of F1 ATP synthase"/>
    <property type="match status" value="1"/>
</dbReference>
<dbReference type="SUPFAM" id="SSF50615">
    <property type="entry name" value="N-terminal domain of alpha and beta subunits of F1 ATP synthase"/>
    <property type="match status" value="1"/>
</dbReference>
<dbReference type="SUPFAM" id="SSF52540">
    <property type="entry name" value="P-loop containing nucleoside triphosphate hydrolases"/>
    <property type="match status" value="1"/>
</dbReference>
<dbReference type="PROSITE" id="PS00152">
    <property type="entry name" value="ATPASE_ALPHA_BETA"/>
    <property type="match status" value="1"/>
</dbReference>
<name>ATPA_HAEDU</name>